<name>ASTRA_MOUSE</name>
<comment type="function">
    <text evidence="1 5 6">Cholesterol transporter that mediates non-vesicular transport of cholesterol from the plasma membrane (PM) to the endoplasmic reticulum (ER) (PubMed:30220461). Contains unique domains for binding cholesterol and the PM, thereby serving as a molecular bridge for the transfer of cholesterol from the PM to the ER (PubMed:30220461). Plays a crucial role in cholesterol homeostasis and has the unique ability to localize to the PM based on the level of membrane cholesterol (PubMed:30220461). In lipid-poor conditions localizes to the ER membrane and in response to excess cholesterol in the PM is recruited to the endoplasmic reticulum-plasma membrane contact sites (EPCS) which is mediated by the GRAM domain (PubMed:30220461). At the EPCS, the sterol-binding VASt/ASTER domain binds to the cholesterol in the PM and facilitates its transfer from the PM to ER (PubMed:30220461). May play a role in tumor progression (PubMed:27585821). Plays a role in autophagy regulation and is required for biogenesis of the autophagosome. This function in autophagy requires its cholesterol-transfer activity (By similarity).</text>
</comment>
<comment type="subcellular location">
    <subcellularLocation>
        <location evidence="6">Endoplasmic reticulum membrane</location>
        <topology evidence="2">Single-pass membrane protein</topology>
    </subcellularLocation>
    <subcellularLocation>
        <location evidence="6">Cell membrane</location>
        <topology evidence="2">Single-pass membrane protein</topology>
    </subcellularLocation>
    <subcellularLocation>
        <location evidence="1">Cytoplasmic vesicle</location>
        <location evidence="1">Autophagosome</location>
    </subcellularLocation>
    <text evidence="1 6">In lipid-poor conditions localizes to the ER membrane and in response to excess cholesterol in the PM is recruited to the endoplasmic reticulum-plasma membrane contact sites (EPCS) (PubMed:30220461). Localizes to distinct EPCS than GRAMD2A and ESYT2/3 (By similarity).</text>
</comment>
<comment type="alternative products">
    <event type="alternative splicing"/>
    <isoform>
        <id>Q8VEF1-1</id>
        <name>1</name>
        <sequence type="displayed"/>
    </isoform>
    <isoform>
        <id>Q8VEF1-2</id>
        <name>2</name>
        <sequence type="described" ref="VSP_025467"/>
    </isoform>
    <isoform>
        <id>Q8VEF1-3</id>
        <name>3</name>
        <sequence type="described" ref="VSP_025468"/>
    </isoform>
</comment>
<comment type="tissue specificity">
    <text evidence="6">Highly expressed in the brain.</text>
</comment>
<comment type="domain">
    <text evidence="6">GRAM domain binds phosphatidylserine in the PM and mediates protein recruitment to endoplasmic reticulum-plasma membrane contact sites (EPCS) in response to excess cholesterol in the PM.</text>
</comment>
<comment type="domain">
    <text evidence="6">VASt (VAD1 Analog of StAR-related lipid transfer) domain, also known as ASTER (Greek for star) domain is a sterol-binding domain.</text>
</comment>
<comment type="miscellaneous">
    <molecule>Isoform 2</molecule>
    <text evidence="10">May be produced at very low levels due to a premature stop codon in the mRNA, leading to nonsense-mediated mRNA decay.</text>
</comment>
<comment type="sequence caution" evidence="10">
    <conflict type="erroneous initiation">
        <sequence resource="EMBL-CDS" id="AAH18554"/>
    </conflict>
    <text>Truncated N-terminus.</text>
</comment>
<comment type="sequence caution" evidence="10">
    <conflict type="miscellaneous discrepancy">
        <sequence resource="EMBL-CDS" id="BAD32472"/>
    </conflict>
    <text>Intron retention.</text>
</comment>
<comment type="sequence caution" evidence="10">
    <conflict type="erroneous initiation">
        <sequence resource="EMBL-CDS" id="BAE29255"/>
    </conflict>
    <text>Truncated N-terminus.</text>
</comment>
<comment type="sequence caution" evidence="10">
    <conflict type="erroneous initiation">
        <sequence resource="EMBL-CDS" id="BAE29372"/>
    </conflict>
    <text>Truncated N-terminus.</text>
</comment>
<comment type="sequence caution" evidence="10">
    <conflict type="erroneous initiation">
        <sequence resource="EMBL-CDS" id="BAE29897"/>
    </conflict>
    <text>Truncated N-terminus.</text>
</comment>
<comment type="sequence caution" evidence="10">
    <conflict type="erroneous initiation">
        <sequence resource="EMBL-CDS" id="BAE30853"/>
    </conflict>
    <text>Truncated N-terminus.</text>
</comment>
<comment type="sequence caution" evidence="10">
    <conflict type="erroneous initiation">
        <sequence resource="EMBL-CDS" id="BAE31103"/>
    </conflict>
    <text>Truncated N-terminus.</text>
</comment>
<comment type="sequence caution" evidence="10">
    <conflict type="erroneous initiation">
        <sequence resource="EMBL-CDS" id="BAE32853"/>
    </conflict>
    <text>Truncated N-terminus.</text>
</comment>
<keyword id="KW-0002">3D-structure</keyword>
<keyword id="KW-0025">Alternative splicing</keyword>
<keyword id="KW-0072">Autophagy</keyword>
<keyword id="KW-1003">Cell membrane</keyword>
<keyword id="KW-0968">Cytoplasmic vesicle</keyword>
<keyword id="KW-0256">Endoplasmic reticulum</keyword>
<keyword id="KW-0445">Lipid transport</keyword>
<keyword id="KW-0446">Lipid-binding</keyword>
<keyword id="KW-0472">Membrane</keyword>
<keyword id="KW-0597">Phosphoprotein</keyword>
<keyword id="KW-1185">Reference proteome</keyword>
<keyword id="KW-0812">Transmembrane</keyword>
<keyword id="KW-1133">Transmembrane helix</keyword>
<keyword id="KW-0813">Transport</keyword>
<feature type="chain" id="PRO_0000287447" description="Protein Aster-A">
    <location>
        <begin position="1"/>
        <end position="722"/>
    </location>
</feature>
<feature type="transmembrane region" description="Helical" evidence="2">
    <location>
        <begin position="609"/>
        <end position="629"/>
    </location>
</feature>
<feature type="domain" description="GRAM" evidence="2">
    <location>
        <begin position="93"/>
        <end position="160"/>
    </location>
</feature>
<feature type="domain" description="VASt" evidence="3">
    <location>
        <begin position="369"/>
        <end position="540"/>
    </location>
</feature>
<feature type="region of interest" description="Disordered" evidence="4">
    <location>
        <begin position="1"/>
        <end position="62"/>
    </location>
</feature>
<feature type="region of interest" description="Disordered" evidence="4">
    <location>
        <begin position="256"/>
        <end position="336"/>
    </location>
</feature>
<feature type="region of interest" description="Disordered" evidence="4">
    <location>
        <begin position="561"/>
        <end position="600"/>
    </location>
</feature>
<feature type="compositionally biased region" description="Low complexity" evidence="4">
    <location>
        <begin position="8"/>
        <end position="18"/>
    </location>
</feature>
<feature type="compositionally biased region" description="Basic and acidic residues" evidence="4">
    <location>
        <begin position="565"/>
        <end position="575"/>
    </location>
</feature>
<feature type="compositionally biased region" description="Polar residues" evidence="4">
    <location>
        <begin position="578"/>
        <end position="594"/>
    </location>
</feature>
<feature type="modified residue" description="Phosphoserine" evidence="12">
    <location>
        <position position="265"/>
    </location>
</feature>
<feature type="modified residue" description="Phosphoserine" evidence="12">
    <location>
        <position position="269"/>
    </location>
</feature>
<feature type="modified residue" description="Phosphoserine" evidence="12">
    <location>
        <position position="273"/>
    </location>
</feature>
<feature type="modified residue" description="Phosphoserine" evidence="1">
    <location>
        <position position="417"/>
    </location>
</feature>
<feature type="splice variant" id="VSP_025467" description="In isoform 2." evidence="8">
    <location>
        <begin position="495"/>
        <end position="722"/>
    </location>
</feature>
<feature type="splice variant" id="VSP_025468" description="In isoform 3." evidence="7">
    <location>
        <begin position="495"/>
        <end position="528"/>
    </location>
</feature>
<feature type="sequence conflict" description="In Ref. 2; AAH18554." evidence="10" ref="2">
    <original>P</original>
    <variation>S</variation>
    <location>
        <position position="37"/>
    </location>
</feature>
<feature type="sequence conflict" description="In Ref. 2; AAH18554." evidence="10" ref="2">
    <original>V</original>
    <variation>M</variation>
    <location>
        <position position="250"/>
    </location>
</feature>
<feature type="sequence conflict" description="In Ref. 2; AAH18554." evidence="10" ref="2">
    <original>G</original>
    <variation>SQ</variation>
    <location>
        <position position="303"/>
    </location>
</feature>
<feature type="sequence conflict" description="In Ref. 1; BAE29897/BAE31103/BAE30853." evidence="10" ref="1">
    <original>T</original>
    <variation>A</variation>
    <location>
        <position position="705"/>
    </location>
</feature>
<feature type="strand" evidence="13">
    <location>
        <begin position="369"/>
        <end position="380"/>
    </location>
</feature>
<feature type="helix" evidence="13">
    <location>
        <begin position="382"/>
        <end position="389"/>
    </location>
</feature>
<feature type="strand" evidence="13">
    <location>
        <begin position="390"/>
        <end position="392"/>
    </location>
</feature>
<feature type="helix" evidence="13">
    <location>
        <begin position="394"/>
        <end position="402"/>
    </location>
</feature>
<feature type="strand" evidence="13">
    <location>
        <begin position="406"/>
        <end position="410"/>
    </location>
</feature>
<feature type="strand" evidence="13">
    <location>
        <begin position="421"/>
        <end position="430"/>
    </location>
</feature>
<feature type="strand" evidence="13">
    <location>
        <begin position="433"/>
        <end position="436"/>
    </location>
</feature>
<feature type="strand" evidence="13">
    <location>
        <begin position="438"/>
        <end position="450"/>
    </location>
</feature>
<feature type="helix" evidence="13">
    <location>
        <begin position="452"/>
        <end position="454"/>
    </location>
</feature>
<feature type="strand" evidence="13">
    <location>
        <begin position="458"/>
        <end position="469"/>
    </location>
</feature>
<feature type="turn" evidence="13">
    <location>
        <begin position="470"/>
        <end position="474"/>
    </location>
</feature>
<feature type="strand" evidence="13">
    <location>
        <begin position="475"/>
        <end position="487"/>
    </location>
</feature>
<feature type="strand" evidence="13">
    <location>
        <begin position="490"/>
        <end position="503"/>
    </location>
</feature>
<feature type="helix" evidence="13">
    <location>
        <begin position="507"/>
        <end position="533"/>
    </location>
</feature>
<dbReference type="EMBL" id="AK083837">
    <property type="protein sequence ID" value="BAC39036.1"/>
    <property type="molecule type" value="mRNA"/>
</dbReference>
<dbReference type="EMBL" id="AK150032">
    <property type="protein sequence ID" value="BAE29255.1"/>
    <property type="status" value="ALT_INIT"/>
    <property type="molecule type" value="mRNA"/>
</dbReference>
<dbReference type="EMBL" id="AK150196">
    <property type="protein sequence ID" value="BAE29372.1"/>
    <property type="status" value="ALT_INIT"/>
    <property type="molecule type" value="mRNA"/>
</dbReference>
<dbReference type="EMBL" id="AK150837">
    <property type="protein sequence ID" value="BAE29897.1"/>
    <property type="status" value="ALT_INIT"/>
    <property type="molecule type" value="mRNA"/>
</dbReference>
<dbReference type="EMBL" id="AK151987">
    <property type="protein sequence ID" value="BAE30853.1"/>
    <property type="status" value="ALT_INIT"/>
    <property type="molecule type" value="mRNA"/>
</dbReference>
<dbReference type="EMBL" id="AK152294">
    <property type="protein sequence ID" value="BAE31103.1"/>
    <property type="status" value="ALT_INIT"/>
    <property type="molecule type" value="mRNA"/>
</dbReference>
<dbReference type="EMBL" id="AK154821">
    <property type="protein sequence ID" value="BAE32853.1"/>
    <property type="status" value="ALT_INIT"/>
    <property type="molecule type" value="mRNA"/>
</dbReference>
<dbReference type="EMBL" id="BC018554">
    <property type="protein sequence ID" value="AAH18554.1"/>
    <property type="status" value="ALT_INIT"/>
    <property type="molecule type" value="mRNA"/>
</dbReference>
<dbReference type="EMBL" id="AK173194">
    <property type="protein sequence ID" value="BAD32472.1"/>
    <property type="status" value="ALT_SEQ"/>
    <property type="molecule type" value="Transcribed_RNA"/>
</dbReference>
<dbReference type="CCDS" id="CCDS52189.1">
    <molecule id="Q8VEF1-1"/>
</dbReference>
<dbReference type="RefSeq" id="NP_082174.3">
    <molecule id="Q8VEF1-1"/>
    <property type="nucleotide sequence ID" value="NM_027898.3"/>
</dbReference>
<dbReference type="PDB" id="6GQF">
    <property type="method" value="X-ray"/>
    <property type="resolution" value="2.90 A"/>
    <property type="chains" value="A/B/C/D=334-562"/>
</dbReference>
<dbReference type="PDBsum" id="6GQF"/>
<dbReference type="SMR" id="Q8VEF1"/>
<dbReference type="BioGRID" id="206857">
    <property type="interactions" value="6"/>
</dbReference>
<dbReference type="FunCoup" id="Q8VEF1">
    <property type="interactions" value="1089"/>
</dbReference>
<dbReference type="IntAct" id="Q8VEF1">
    <property type="interactions" value="1"/>
</dbReference>
<dbReference type="STRING" id="10090.ENSMUSP00000001280"/>
<dbReference type="GlyGen" id="Q8VEF1">
    <property type="glycosylation" value="3 sites, 1 N-linked glycan (1 site)"/>
</dbReference>
<dbReference type="iPTMnet" id="Q8VEF1"/>
<dbReference type="PhosphoSitePlus" id="Q8VEF1"/>
<dbReference type="PaxDb" id="10090-ENSMUSP00000001280"/>
<dbReference type="PeptideAtlas" id="Q8VEF1"/>
<dbReference type="ProteomicsDB" id="271090">
    <molecule id="Q8VEF1-1"/>
</dbReference>
<dbReference type="ProteomicsDB" id="271091">
    <molecule id="Q8VEF1-2"/>
</dbReference>
<dbReference type="ProteomicsDB" id="271092">
    <molecule id="Q8VEF1-3"/>
</dbReference>
<dbReference type="Antibodypedia" id="2264">
    <property type="antibodies" value="74 antibodies from 15 providers"/>
</dbReference>
<dbReference type="DNASU" id="52857"/>
<dbReference type="Ensembl" id="ENSMUST00000001280.14">
    <molecule id="Q8VEF1-1"/>
    <property type="protein sequence ID" value="ENSMUSP00000001280.8"/>
    <property type="gene ID" value="ENSMUSG00000001248.16"/>
</dbReference>
<dbReference type="Ensembl" id="ENSMUST00000186634.7">
    <molecule id="Q8VEF1-2"/>
    <property type="protein sequence ID" value="ENSMUSP00000140195.2"/>
    <property type="gene ID" value="ENSMUSG00000001248.16"/>
</dbReference>
<dbReference type="GeneID" id="52857"/>
<dbReference type="KEGG" id="mmu:52857"/>
<dbReference type="UCSC" id="uc009gif.1">
    <molecule id="Q8VEF1-1"/>
    <property type="organism name" value="mouse"/>
</dbReference>
<dbReference type="AGR" id="MGI:105490"/>
<dbReference type="CTD" id="57655"/>
<dbReference type="MGI" id="MGI:105490">
    <property type="gene designation" value="Gramd1a"/>
</dbReference>
<dbReference type="VEuPathDB" id="HostDB:ENSMUSG00000001248"/>
<dbReference type="eggNOG" id="KOG1032">
    <property type="taxonomic scope" value="Eukaryota"/>
</dbReference>
<dbReference type="GeneTree" id="ENSGT00940000161007"/>
<dbReference type="HOGENOM" id="CLU_015189_1_2_1"/>
<dbReference type="InParanoid" id="Q8VEF1"/>
<dbReference type="OMA" id="LIVYSCA"/>
<dbReference type="OrthoDB" id="2162691at2759"/>
<dbReference type="PhylomeDB" id="Q8VEF1"/>
<dbReference type="TreeFam" id="TF327695"/>
<dbReference type="BioGRID-ORCS" id="52857">
    <property type="hits" value="4 hits in 79 CRISPR screens"/>
</dbReference>
<dbReference type="ChiTaRS" id="Gramd1a">
    <property type="organism name" value="mouse"/>
</dbReference>
<dbReference type="PRO" id="PR:Q8VEF1"/>
<dbReference type="Proteomes" id="UP000000589">
    <property type="component" value="Chromosome 7"/>
</dbReference>
<dbReference type="RNAct" id="Q8VEF1">
    <property type="molecule type" value="protein"/>
</dbReference>
<dbReference type="Bgee" id="ENSMUSG00000001248">
    <property type="expression patterns" value="Expressed in embryonic brain and 254 other cell types or tissues"/>
</dbReference>
<dbReference type="ExpressionAtlas" id="Q8VEF1">
    <property type="expression patterns" value="baseline and differential"/>
</dbReference>
<dbReference type="GO" id="GO:0005776">
    <property type="term" value="C:autophagosome"/>
    <property type="evidence" value="ECO:0007669"/>
    <property type="project" value="UniProtKB-SubCell"/>
</dbReference>
<dbReference type="GO" id="GO:0031410">
    <property type="term" value="C:cytoplasmic vesicle"/>
    <property type="evidence" value="ECO:0007669"/>
    <property type="project" value="UniProtKB-KW"/>
</dbReference>
<dbReference type="GO" id="GO:0005829">
    <property type="term" value="C:cytosol"/>
    <property type="evidence" value="ECO:0007669"/>
    <property type="project" value="Ensembl"/>
</dbReference>
<dbReference type="GO" id="GO:0005789">
    <property type="term" value="C:endoplasmic reticulum membrane"/>
    <property type="evidence" value="ECO:0000314"/>
    <property type="project" value="UniProtKB"/>
</dbReference>
<dbReference type="GO" id="GO:0140268">
    <property type="term" value="C:endoplasmic reticulum-plasma membrane contact site"/>
    <property type="evidence" value="ECO:0000314"/>
    <property type="project" value="UniProtKB"/>
</dbReference>
<dbReference type="GO" id="GO:0044232">
    <property type="term" value="C:organelle membrane contact site"/>
    <property type="evidence" value="ECO:0000250"/>
    <property type="project" value="UniProtKB"/>
</dbReference>
<dbReference type="GO" id="GO:0005886">
    <property type="term" value="C:plasma membrane"/>
    <property type="evidence" value="ECO:0000314"/>
    <property type="project" value="UniProtKB"/>
</dbReference>
<dbReference type="GO" id="GO:0015485">
    <property type="term" value="F:cholesterol binding"/>
    <property type="evidence" value="ECO:0000314"/>
    <property type="project" value="UniProtKB"/>
</dbReference>
<dbReference type="GO" id="GO:0120020">
    <property type="term" value="F:cholesterol transfer activity"/>
    <property type="evidence" value="ECO:0000315"/>
    <property type="project" value="UniProtKB"/>
</dbReference>
<dbReference type="GO" id="GO:0006914">
    <property type="term" value="P:autophagy"/>
    <property type="evidence" value="ECO:0007669"/>
    <property type="project" value="UniProtKB-KW"/>
</dbReference>
<dbReference type="GO" id="GO:0071397">
    <property type="term" value="P:cellular response to cholesterol"/>
    <property type="evidence" value="ECO:0000314"/>
    <property type="project" value="UniProtKB"/>
</dbReference>
<dbReference type="CDD" id="cd13220">
    <property type="entry name" value="PH-GRAM_GRAMDC"/>
    <property type="match status" value="1"/>
</dbReference>
<dbReference type="FunFam" id="2.30.29.30:FF:000008">
    <property type="entry name" value="GRAM domain containing 1B"/>
    <property type="match status" value="1"/>
</dbReference>
<dbReference type="Gene3D" id="2.30.29.30">
    <property type="entry name" value="Pleckstrin-homology domain (PH domain)/Phosphotyrosine-binding domain (PTB)"/>
    <property type="match status" value="1"/>
</dbReference>
<dbReference type="InterPro" id="IPR051482">
    <property type="entry name" value="Cholesterol_transport"/>
</dbReference>
<dbReference type="InterPro" id="IPR004182">
    <property type="entry name" value="GRAM"/>
</dbReference>
<dbReference type="InterPro" id="IPR011993">
    <property type="entry name" value="PH-like_dom_sf"/>
</dbReference>
<dbReference type="InterPro" id="IPR031968">
    <property type="entry name" value="VASt"/>
</dbReference>
<dbReference type="PANTHER" id="PTHR23319">
    <property type="entry name" value="GRAM DOMAIN CONTAINING 1B, ISOFORM E"/>
    <property type="match status" value="1"/>
</dbReference>
<dbReference type="PANTHER" id="PTHR23319:SF8">
    <property type="entry name" value="PROTEIN ASTER-A"/>
    <property type="match status" value="1"/>
</dbReference>
<dbReference type="Pfam" id="PF02893">
    <property type="entry name" value="GRAM"/>
    <property type="match status" value="1"/>
</dbReference>
<dbReference type="Pfam" id="PF16016">
    <property type="entry name" value="VASt"/>
    <property type="match status" value="1"/>
</dbReference>
<dbReference type="SMART" id="SM00568">
    <property type="entry name" value="GRAM"/>
    <property type="match status" value="1"/>
</dbReference>
<dbReference type="PROSITE" id="PS51778">
    <property type="entry name" value="VAST"/>
    <property type="match status" value="1"/>
</dbReference>
<accession>Q8VEF1</accession>
<accession>Q3U914</accession>
<accession>Q3UD89</accession>
<accession>Q69ZH2</accession>
<accession>Q8BNF1</accession>
<proteinExistence type="evidence at protein level"/>
<reference key="1">
    <citation type="journal article" date="2005" name="Science">
        <title>The transcriptional landscape of the mammalian genome.</title>
        <authorList>
            <person name="Carninci P."/>
            <person name="Kasukawa T."/>
            <person name="Katayama S."/>
            <person name="Gough J."/>
            <person name="Frith M.C."/>
            <person name="Maeda N."/>
            <person name="Oyama R."/>
            <person name="Ravasi T."/>
            <person name="Lenhard B."/>
            <person name="Wells C."/>
            <person name="Kodzius R."/>
            <person name="Shimokawa K."/>
            <person name="Bajic V.B."/>
            <person name="Brenner S.E."/>
            <person name="Batalov S."/>
            <person name="Forrest A.R."/>
            <person name="Zavolan M."/>
            <person name="Davis M.J."/>
            <person name="Wilming L.G."/>
            <person name="Aidinis V."/>
            <person name="Allen J.E."/>
            <person name="Ambesi-Impiombato A."/>
            <person name="Apweiler R."/>
            <person name="Aturaliya R.N."/>
            <person name="Bailey T.L."/>
            <person name="Bansal M."/>
            <person name="Baxter L."/>
            <person name="Beisel K.W."/>
            <person name="Bersano T."/>
            <person name="Bono H."/>
            <person name="Chalk A.M."/>
            <person name="Chiu K.P."/>
            <person name="Choudhary V."/>
            <person name="Christoffels A."/>
            <person name="Clutterbuck D.R."/>
            <person name="Crowe M.L."/>
            <person name="Dalla E."/>
            <person name="Dalrymple B.P."/>
            <person name="de Bono B."/>
            <person name="Della Gatta G."/>
            <person name="di Bernardo D."/>
            <person name="Down T."/>
            <person name="Engstrom P."/>
            <person name="Fagiolini M."/>
            <person name="Faulkner G."/>
            <person name="Fletcher C.F."/>
            <person name="Fukushima T."/>
            <person name="Furuno M."/>
            <person name="Futaki S."/>
            <person name="Gariboldi M."/>
            <person name="Georgii-Hemming P."/>
            <person name="Gingeras T.R."/>
            <person name="Gojobori T."/>
            <person name="Green R.E."/>
            <person name="Gustincich S."/>
            <person name="Harbers M."/>
            <person name="Hayashi Y."/>
            <person name="Hensch T.K."/>
            <person name="Hirokawa N."/>
            <person name="Hill D."/>
            <person name="Huminiecki L."/>
            <person name="Iacono M."/>
            <person name="Ikeo K."/>
            <person name="Iwama A."/>
            <person name="Ishikawa T."/>
            <person name="Jakt M."/>
            <person name="Kanapin A."/>
            <person name="Katoh M."/>
            <person name="Kawasawa Y."/>
            <person name="Kelso J."/>
            <person name="Kitamura H."/>
            <person name="Kitano H."/>
            <person name="Kollias G."/>
            <person name="Krishnan S.P."/>
            <person name="Kruger A."/>
            <person name="Kummerfeld S.K."/>
            <person name="Kurochkin I.V."/>
            <person name="Lareau L.F."/>
            <person name="Lazarevic D."/>
            <person name="Lipovich L."/>
            <person name="Liu J."/>
            <person name="Liuni S."/>
            <person name="McWilliam S."/>
            <person name="Madan Babu M."/>
            <person name="Madera M."/>
            <person name="Marchionni L."/>
            <person name="Matsuda H."/>
            <person name="Matsuzawa S."/>
            <person name="Miki H."/>
            <person name="Mignone F."/>
            <person name="Miyake S."/>
            <person name="Morris K."/>
            <person name="Mottagui-Tabar S."/>
            <person name="Mulder N."/>
            <person name="Nakano N."/>
            <person name="Nakauchi H."/>
            <person name="Ng P."/>
            <person name="Nilsson R."/>
            <person name="Nishiguchi S."/>
            <person name="Nishikawa S."/>
            <person name="Nori F."/>
            <person name="Ohara O."/>
            <person name="Okazaki Y."/>
            <person name="Orlando V."/>
            <person name="Pang K.C."/>
            <person name="Pavan W.J."/>
            <person name="Pavesi G."/>
            <person name="Pesole G."/>
            <person name="Petrovsky N."/>
            <person name="Piazza S."/>
            <person name="Reed J."/>
            <person name="Reid J.F."/>
            <person name="Ring B.Z."/>
            <person name="Ringwald M."/>
            <person name="Rost B."/>
            <person name="Ruan Y."/>
            <person name="Salzberg S.L."/>
            <person name="Sandelin A."/>
            <person name="Schneider C."/>
            <person name="Schoenbach C."/>
            <person name="Sekiguchi K."/>
            <person name="Semple C.A."/>
            <person name="Seno S."/>
            <person name="Sessa L."/>
            <person name="Sheng Y."/>
            <person name="Shibata Y."/>
            <person name="Shimada H."/>
            <person name="Shimada K."/>
            <person name="Silva D."/>
            <person name="Sinclair B."/>
            <person name="Sperling S."/>
            <person name="Stupka E."/>
            <person name="Sugiura K."/>
            <person name="Sultana R."/>
            <person name="Takenaka Y."/>
            <person name="Taki K."/>
            <person name="Tammoja K."/>
            <person name="Tan S.L."/>
            <person name="Tang S."/>
            <person name="Taylor M.S."/>
            <person name="Tegner J."/>
            <person name="Teichmann S.A."/>
            <person name="Ueda H.R."/>
            <person name="van Nimwegen E."/>
            <person name="Verardo R."/>
            <person name="Wei C.L."/>
            <person name="Yagi K."/>
            <person name="Yamanishi H."/>
            <person name="Zabarovsky E."/>
            <person name="Zhu S."/>
            <person name="Zimmer A."/>
            <person name="Hide W."/>
            <person name="Bult C."/>
            <person name="Grimmond S.M."/>
            <person name="Teasdale R.D."/>
            <person name="Liu E.T."/>
            <person name="Brusic V."/>
            <person name="Quackenbush J."/>
            <person name="Wahlestedt C."/>
            <person name="Mattick J.S."/>
            <person name="Hume D.A."/>
            <person name="Kai C."/>
            <person name="Sasaki D."/>
            <person name="Tomaru Y."/>
            <person name="Fukuda S."/>
            <person name="Kanamori-Katayama M."/>
            <person name="Suzuki M."/>
            <person name="Aoki J."/>
            <person name="Arakawa T."/>
            <person name="Iida J."/>
            <person name="Imamura K."/>
            <person name="Itoh M."/>
            <person name="Kato T."/>
            <person name="Kawaji H."/>
            <person name="Kawagashira N."/>
            <person name="Kawashima T."/>
            <person name="Kojima M."/>
            <person name="Kondo S."/>
            <person name="Konno H."/>
            <person name="Nakano K."/>
            <person name="Ninomiya N."/>
            <person name="Nishio T."/>
            <person name="Okada M."/>
            <person name="Plessy C."/>
            <person name="Shibata K."/>
            <person name="Shiraki T."/>
            <person name="Suzuki S."/>
            <person name="Tagami M."/>
            <person name="Waki K."/>
            <person name="Watahiki A."/>
            <person name="Okamura-Oho Y."/>
            <person name="Suzuki H."/>
            <person name="Kawai J."/>
            <person name="Hayashizaki Y."/>
        </authorList>
    </citation>
    <scope>NUCLEOTIDE SEQUENCE [LARGE SCALE MRNA] (ISOFORMS 1 AND 2)</scope>
    <source>
        <strain>C57BL/6J</strain>
        <strain>NOD</strain>
        <tissue>Bone marrow</tissue>
        <tissue>Spinal ganglion</tissue>
    </source>
</reference>
<reference key="2">
    <citation type="journal article" date="2004" name="Genome Res.">
        <title>The status, quality, and expansion of the NIH full-length cDNA project: the Mammalian Gene Collection (MGC).</title>
        <authorList>
            <consortium name="The MGC Project Team"/>
        </authorList>
    </citation>
    <scope>NUCLEOTIDE SEQUENCE [LARGE SCALE MRNA] OF 34-722 (ISOFORM 1)</scope>
    <source>
        <strain>Czech II</strain>
        <tissue>Mammary tumor</tissue>
    </source>
</reference>
<reference key="3">
    <citation type="journal article" date="2004" name="DNA Res.">
        <title>Prediction of the coding sequences of mouse homologues of KIAA gene: IV. The complete nucleotide sequences of 500 mouse KIAA-homologous cDNAs identified by screening of terminal sequences of cDNA clones randomly sampled from size-fractionated libraries.</title>
        <authorList>
            <person name="Okazaki N."/>
            <person name="Kikuno R."/>
            <person name="Ohara R."/>
            <person name="Inamoto S."/>
            <person name="Koseki H."/>
            <person name="Hiraoka S."/>
            <person name="Saga Y."/>
            <person name="Seino S."/>
            <person name="Nishimura M."/>
            <person name="Kaisho T."/>
            <person name="Hoshino K."/>
            <person name="Kitamura H."/>
            <person name="Nagase T."/>
            <person name="Ohara O."/>
            <person name="Koga H."/>
        </authorList>
    </citation>
    <scope>NUCLEOTIDE SEQUENCE [LARGE SCALE MRNA] OF 293-722 (ISOFORM 3)</scope>
    <source>
        <tissue>Brain</tissue>
    </source>
</reference>
<reference key="4">
    <citation type="journal article" date="2010" name="Cell">
        <title>A tissue-specific atlas of mouse protein phosphorylation and expression.</title>
        <authorList>
            <person name="Huttlin E.L."/>
            <person name="Jedrychowski M.P."/>
            <person name="Elias J.E."/>
            <person name="Goswami T."/>
            <person name="Rad R."/>
            <person name="Beausoleil S.A."/>
            <person name="Villen J."/>
            <person name="Haas W."/>
            <person name="Sowa M.E."/>
            <person name="Gygi S.P."/>
        </authorList>
    </citation>
    <scope>PHOSPHORYLATION [LARGE SCALE ANALYSIS] AT SER-265; SER-269 AND SER-273</scope>
    <scope>IDENTIFICATION BY MASS SPECTROMETRY [LARGE SCALE ANALYSIS]</scope>
    <source>
        <tissue>Brain</tissue>
        <tissue>Kidney</tissue>
        <tissue>Lung</tissue>
        <tissue>Pancreas</tissue>
        <tissue>Testis</tissue>
    </source>
</reference>
<reference key="5">
    <citation type="journal article" date="2016" name="Sci. Rep.">
        <title>GRAM domain-containing protein 1A (GRAMD1A) promotes the expansion of hepatocellular carcinoma stem cell and hepatocellular carcinoma growth through STAT5.</title>
        <authorList>
            <person name="Fu B."/>
            <person name="Meng W."/>
            <person name="Zhao H."/>
            <person name="Zhang B."/>
            <person name="Tang H."/>
            <person name="Zou Y."/>
            <person name="Yao J."/>
            <person name="Li H."/>
            <person name="Zhang T."/>
        </authorList>
    </citation>
    <scope>FUNCTION</scope>
</reference>
<reference key="6">
    <citation type="journal article" date="2018" name="Cell">
        <title>Aster proteins facilitate nonvesicular plasma membrane to ER cholesterol transport in mammalian cells.</title>
        <authorList>
            <person name="Sandhu J."/>
            <person name="Li S."/>
            <person name="Fairall L."/>
            <person name="Pfisterer S.G."/>
            <person name="Gurnett J.E."/>
            <person name="Xiao X."/>
            <person name="Weston T.A."/>
            <person name="Vashi D."/>
            <person name="Ferrari A."/>
            <person name="Orozco J.L."/>
            <person name="Hartman C.L."/>
            <person name="Strugatsky D."/>
            <person name="Lee S.D."/>
            <person name="He C."/>
            <person name="Hong C."/>
            <person name="Jiang H."/>
            <person name="Bentolila L.A."/>
            <person name="Gatta A.T."/>
            <person name="Levine T.P."/>
            <person name="Ferng A."/>
            <person name="Lee R."/>
            <person name="Ford D.A."/>
            <person name="Young S.G."/>
            <person name="Ikonen E."/>
            <person name="Schwabe J.W.R."/>
            <person name="Tontonoz P."/>
        </authorList>
    </citation>
    <scope>X-RAY CRYSTALLOGRAPHY (2.90 ANGSTROMS) OF 334-562 IN COMPLEX WITH 25-HYDROXYCHOLESTEROL</scope>
    <scope>FUNCTION</scope>
    <scope>SUBCELLULAR LOCATION</scope>
    <scope>TISSUE SPECIFICITY</scope>
    <scope>DOMAINS GRAM AND VAST/ASTER</scope>
    <scope>GENE STRUCTURE</scope>
</reference>
<gene>
    <name evidence="11" type="primary">Gramd1a</name>
    <name type="synonym">D7Bwg0611e</name>
    <name type="synonym">Kiaa1533</name>
</gene>
<organism>
    <name type="scientific">Mus musculus</name>
    <name type="common">Mouse</name>
    <dbReference type="NCBI Taxonomy" id="10090"/>
    <lineage>
        <taxon>Eukaryota</taxon>
        <taxon>Metazoa</taxon>
        <taxon>Chordata</taxon>
        <taxon>Craniata</taxon>
        <taxon>Vertebrata</taxon>
        <taxon>Euteleostomi</taxon>
        <taxon>Mammalia</taxon>
        <taxon>Eutheria</taxon>
        <taxon>Euarchontoglires</taxon>
        <taxon>Glires</taxon>
        <taxon>Rodentia</taxon>
        <taxon>Myomorpha</taxon>
        <taxon>Muroidea</taxon>
        <taxon>Muridae</taxon>
        <taxon>Murinae</taxon>
        <taxon>Mus</taxon>
        <taxon>Mus</taxon>
    </lineage>
</organism>
<sequence length="722" mass="80699">MFDTTPHSGRSSPSSSPSLRKRLQLLPPIRPPPASEPEPGTMVEKGSDSSSEKSGVSGTLSTQSLGSRNFIRNSKKMQSWYSMLCPTYKQRNEDFRKLFSKLPEAERLIVDYSCALQREILLQGRLYLSENWICFYSNIFRWETTISIQLKEVTCLKKEKTAKLIPNAIQICTESEKHFFTSFGARDRCFLLIFRLWQNALLEKTLSPRELWHLVHQCYGSELGLTSEDEDYVCPLQLNGLGSPKEVGDVIALSDISPSGAADHSQEPSPVGSRRGRVTPNLSRASSDADHGAEEDKEEQTDGLDASSSQTVTPVAEPLSSEPTPPDGPTSSLGPLDLLSREELLTDTSNSSSSTGEEGDLAALLPDLSGRLLINSVFHMGAERLQQMLFSDSPFLQGFLQQRKFTDVTLSPWSSDSKCHQRRVLTYTIPISNQLGPKSASVVETQTLFRRGPQAGGCVVDSEVLTQGIPYQDYFYTAHRYCILGLARNKARLRVSSEIRYRKQPWSLVKSLIEKNSWSGIEDYFHHLDRELAKAEKLSLEEGGKDTRGLLSGLRRRKRPLSWRGHRDGPQHPDPDPCTQTSMHTSGSLSSRFSEPSVDQGPGAGIPSALVLISIVLIVLIALNALLFYRLWSLERTAHTFESWHSLALAKGKFPQTATEWAEILALQKHFHSVEVHKWRQILRASVELLDEMKFSLEKLHQGITVPDPPLDTQPQPDDSFP</sequence>
<protein>
    <recommendedName>
        <fullName evidence="9">Protein Aster-A</fullName>
    </recommendedName>
    <alternativeName>
        <fullName evidence="10">GRAM domain-containing protein 1A</fullName>
    </alternativeName>
</protein>
<evidence type="ECO:0000250" key="1">
    <source>
        <dbReference type="UniProtKB" id="Q96CP6"/>
    </source>
</evidence>
<evidence type="ECO:0000255" key="2"/>
<evidence type="ECO:0000255" key="3">
    <source>
        <dbReference type="PROSITE-ProRule" id="PRU01114"/>
    </source>
</evidence>
<evidence type="ECO:0000256" key="4">
    <source>
        <dbReference type="SAM" id="MobiDB-lite"/>
    </source>
</evidence>
<evidence type="ECO:0000269" key="5">
    <source>
    </source>
</evidence>
<evidence type="ECO:0000269" key="6">
    <source>
    </source>
</evidence>
<evidence type="ECO:0000303" key="7">
    <source>
    </source>
</evidence>
<evidence type="ECO:0000303" key="8">
    <source>
    </source>
</evidence>
<evidence type="ECO:0000303" key="9">
    <source>
    </source>
</evidence>
<evidence type="ECO:0000305" key="10"/>
<evidence type="ECO:0000312" key="11">
    <source>
        <dbReference type="MGI" id="MGI:105490"/>
    </source>
</evidence>
<evidence type="ECO:0007744" key="12">
    <source>
    </source>
</evidence>
<evidence type="ECO:0007829" key="13">
    <source>
        <dbReference type="PDB" id="6GQF"/>
    </source>
</evidence>